<comment type="function">
    <text evidence="1">Transcriptional activator. Seems to be essential for sexual differentiation and formation of the primary steroidogenic tissues. Binds to the Ad4 site found in the promoter region of steroidogenic P450 genes such as CYP11A, CYP11B and CYP21B. Also regulates the AMH/Muellerian inhibiting substance gene as well as the AHCH and STAR genes. 5'-YCAAGGYC-3' and 5'-RRAGGTCA-3' are the consensus sequences for the recognition by NR5A1. The SFPQ-NONO-NR5A1 complex binds to the CYP17 promoter and regulates basal and cAMP-dependent transcriptional activity. Binds phospholipids with a phosphatidylinositol (PI) headgroup, in particular PI(3,4)P2 and PI(3,4,5)P3. Activated by the phosphorylation of NR5A1 by HIPK3 leading to increased steroidogenic gene expression upon cAMP signaling pathway stimulation (By similarity).</text>
</comment>
<comment type="subunit">
    <text evidence="1">Binds DNA as a monomer. Part of a complex consisting of SFPQ, NONO and NR5A1. Interacts with NR0B2. Interacts with DGKQ and CDK7. Binds to and activated by HIPK3 (By similarity).</text>
</comment>
<comment type="interaction">
    <interactant intactId="EBI-850837">
        <id>Q04752</id>
    </interactant>
    <interactant intactId="EBI-781310">
        <id>O60869-1</id>
        <label>EDF1</label>
    </interactant>
    <organismsDiffer>true</organismsDiffer>
    <experiments>4</experiments>
</comment>
<comment type="subcellular location">
    <subcellularLocation>
        <location>Nucleus</location>
    </subcellularLocation>
</comment>
<comment type="tissue specificity">
    <text>Adrenal, ovary, testis, placenta, adipocyte, and brain.</text>
</comment>
<comment type="PTM">
    <text>May be regulated by phosphorylation and dephosphorylation.</text>
</comment>
<comment type="PTM">
    <text evidence="1">Acetylation stimulates the transcriptional activity.</text>
</comment>
<comment type="PTM">
    <text evidence="1">Sumoylation reduces CDK7-mediated phosphorylation on Ser-203.</text>
</comment>
<comment type="PTM">
    <text evidence="1">Phosphorylated on Ser-203 by CDK7. This phosphorylation promotes transcriptional activity (By similarity).</text>
</comment>
<comment type="similarity">
    <text evidence="7">Belongs to the nuclear hormone receptor family. NR5 subfamily.</text>
</comment>
<dbReference type="EMBL" id="D13569">
    <property type="protein sequence ID" value="BAA02764.1"/>
    <property type="molecule type" value="mRNA"/>
</dbReference>
<dbReference type="EMBL" id="S45997">
    <property type="protein sequence ID" value="AAB23574.2"/>
    <property type="molecule type" value="mRNA"/>
</dbReference>
<dbReference type="PIR" id="A46077">
    <property type="entry name" value="A46077"/>
</dbReference>
<dbReference type="RefSeq" id="NP_776828.1">
    <property type="nucleotide sequence ID" value="NM_174403.2"/>
</dbReference>
<dbReference type="RefSeq" id="XP_010808627.1">
    <property type="nucleotide sequence ID" value="XM_010810325.4"/>
</dbReference>
<dbReference type="RefSeq" id="XP_024854059.1">
    <property type="nucleotide sequence ID" value="XM_024998291.2"/>
</dbReference>
<dbReference type="SMR" id="Q04752"/>
<dbReference type="FunCoup" id="Q04752">
    <property type="interactions" value="395"/>
</dbReference>
<dbReference type="IntAct" id="Q04752">
    <property type="interactions" value="1"/>
</dbReference>
<dbReference type="STRING" id="9913.ENSBTAP00000011869"/>
<dbReference type="iPTMnet" id="Q04752"/>
<dbReference type="PaxDb" id="9913-ENSBTAP00000011869"/>
<dbReference type="Ensembl" id="ENSBTAT00000011869.5">
    <property type="protein sequence ID" value="ENSBTAP00000011869.3"/>
    <property type="gene ID" value="ENSBTAG00000009017.5"/>
</dbReference>
<dbReference type="GeneID" id="281948"/>
<dbReference type="KEGG" id="bta:281948"/>
<dbReference type="CTD" id="2516"/>
<dbReference type="VEuPathDB" id="HostDB:ENSBTAG00000009017"/>
<dbReference type="VGNC" id="VGNC:32248">
    <property type="gene designation" value="NR5A1"/>
</dbReference>
<dbReference type="eggNOG" id="KOG4218">
    <property type="taxonomic scope" value="Eukaryota"/>
</dbReference>
<dbReference type="GeneTree" id="ENSGT00940000153391"/>
<dbReference type="HOGENOM" id="CLU_011437_0_0_1"/>
<dbReference type="InParanoid" id="Q04752"/>
<dbReference type="OMA" id="YPYPEVY"/>
<dbReference type="OrthoDB" id="5984981at2759"/>
<dbReference type="TreeFam" id="TF350737"/>
<dbReference type="Reactome" id="R-BTA-383280">
    <property type="pathway name" value="Nuclear Receptor transcription pathway"/>
</dbReference>
<dbReference type="Reactome" id="R-BTA-4090294">
    <property type="pathway name" value="SUMOylation of intracellular receptors"/>
</dbReference>
<dbReference type="Proteomes" id="UP000009136">
    <property type="component" value="Chromosome 11"/>
</dbReference>
<dbReference type="Bgee" id="ENSBTAG00000009017">
    <property type="expression patterns" value="Expressed in theca cell and 30 other cell types or tissues"/>
</dbReference>
<dbReference type="GO" id="GO:0005829">
    <property type="term" value="C:cytosol"/>
    <property type="evidence" value="ECO:0007669"/>
    <property type="project" value="Ensembl"/>
</dbReference>
<dbReference type="GO" id="GO:0005654">
    <property type="term" value="C:nucleoplasm"/>
    <property type="evidence" value="ECO:0007669"/>
    <property type="project" value="Ensembl"/>
</dbReference>
<dbReference type="GO" id="GO:0005634">
    <property type="term" value="C:nucleus"/>
    <property type="evidence" value="ECO:0000315"/>
    <property type="project" value="UniProtKB"/>
</dbReference>
<dbReference type="GO" id="GO:0090575">
    <property type="term" value="C:RNA polymerase II transcription regulator complex"/>
    <property type="evidence" value="ECO:0000318"/>
    <property type="project" value="GO_Central"/>
</dbReference>
<dbReference type="GO" id="GO:0003682">
    <property type="term" value="F:chromatin binding"/>
    <property type="evidence" value="ECO:0007669"/>
    <property type="project" value="Ensembl"/>
</dbReference>
<dbReference type="GO" id="GO:0003677">
    <property type="term" value="F:DNA binding"/>
    <property type="evidence" value="ECO:0000250"/>
    <property type="project" value="HGNC-UCL"/>
</dbReference>
<dbReference type="GO" id="GO:0019899">
    <property type="term" value="F:enzyme binding"/>
    <property type="evidence" value="ECO:0007669"/>
    <property type="project" value="Ensembl"/>
</dbReference>
<dbReference type="GO" id="GO:0003707">
    <property type="term" value="F:nuclear steroid receptor activity"/>
    <property type="evidence" value="ECO:0000314"/>
    <property type="project" value="UniProtKB"/>
</dbReference>
<dbReference type="GO" id="GO:0005543">
    <property type="term" value="F:phospholipid binding"/>
    <property type="evidence" value="ECO:0007669"/>
    <property type="project" value="Ensembl"/>
</dbReference>
<dbReference type="GO" id="GO:0000978">
    <property type="term" value="F:RNA polymerase II cis-regulatory region sequence-specific DNA binding"/>
    <property type="evidence" value="ECO:0000318"/>
    <property type="project" value="GO_Central"/>
</dbReference>
<dbReference type="GO" id="GO:0043565">
    <property type="term" value="F:sequence-specific DNA binding"/>
    <property type="evidence" value="ECO:0000315"/>
    <property type="project" value="UniProtKB"/>
</dbReference>
<dbReference type="GO" id="GO:0001222">
    <property type="term" value="F:transcription corepressor binding"/>
    <property type="evidence" value="ECO:0000353"/>
    <property type="project" value="UniProtKB"/>
</dbReference>
<dbReference type="GO" id="GO:0008270">
    <property type="term" value="F:zinc ion binding"/>
    <property type="evidence" value="ECO:0007669"/>
    <property type="project" value="UniProtKB-KW"/>
</dbReference>
<dbReference type="GO" id="GO:0030325">
    <property type="term" value="P:adrenal gland development"/>
    <property type="evidence" value="ECO:0007669"/>
    <property type="project" value="Ensembl"/>
</dbReference>
<dbReference type="GO" id="GO:0008585">
    <property type="term" value="P:female gonad development"/>
    <property type="evidence" value="ECO:0000250"/>
    <property type="project" value="UniProtKB"/>
</dbReference>
<dbReference type="GO" id="GO:0042445">
    <property type="term" value="P:hormone metabolic process"/>
    <property type="evidence" value="ECO:0007669"/>
    <property type="project" value="Ensembl"/>
</dbReference>
<dbReference type="GO" id="GO:0009755">
    <property type="term" value="P:hormone-mediated signaling pathway"/>
    <property type="evidence" value="ECO:0000318"/>
    <property type="project" value="GO_Central"/>
</dbReference>
<dbReference type="GO" id="GO:0033327">
    <property type="term" value="P:Leydig cell differentiation"/>
    <property type="evidence" value="ECO:0007669"/>
    <property type="project" value="Ensembl"/>
</dbReference>
<dbReference type="GO" id="GO:0001553">
    <property type="term" value="P:luteinization"/>
    <property type="evidence" value="ECO:0007669"/>
    <property type="project" value="Ensembl"/>
</dbReference>
<dbReference type="GO" id="GO:0051457">
    <property type="term" value="P:maintenance of protein location in nucleus"/>
    <property type="evidence" value="ECO:0007669"/>
    <property type="project" value="Ensembl"/>
</dbReference>
<dbReference type="GO" id="GO:0008584">
    <property type="term" value="P:male gonad development"/>
    <property type="evidence" value="ECO:0000250"/>
    <property type="project" value="UniProtKB"/>
</dbReference>
<dbReference type="GO" id="GO:0030238">
    <property type="term" value="P:male sex determination"/>
    <property type="evidence" value="ECO:0007669"/>
    <property type="project" value="Ensembl"/>
</dbReference>
<dbReference type="GO" id="GO:2000195">
    <property type="term" value="P:negative regulation of female gonad development"/>
    <property type="evidence" value="ECO:0007669"/>
    <property type="project" value="Ensembl"/>
</dbReference>
<dbReference type="GO" id="GO:0010628">
    <property type="term" value="P:positive regulation of gene expression"/>
    <property type="evidence" value="ECO:0000250"/>
    <property type="project" value="UniProtKB"/>
</dbReference>
<dbReference type="GO" id="GO:2000020">
    <property type="term" value="P:positive regulation of male gonad development"/>
    <property type="evidence" value="ECO:0007669"/>
    <property type="project" value="Ensembl"/>
</dbReference>
<dbReference type="GO" id="GO:0045944">
    <property type="term" value="P:positive regulation of transcription by RNA polymerase II"/>
    <property type="evidence" value="ECO:0007669"/>
    <property type="project" value="Ensembl"/>
</dbReference>
<dbReference type="GO" id="GO:0006357">
    <property type="term" value="P:regulation of transcription by RNA polymerase II"/>
    <property type="evidence" value="ECO:0000318"/>
    <property type="project" value="GO_Central"/>
</dbReference>
<dbReference type="GO" id="GO:0060008">
    <property type="term" value="P:Sertoli cell differentiation"/>
    <property type="evidence" value="ECO:0007669"/>
    <property type="project" value="Ensembl"/>
</dbReference>
<dbReference type="GO" id="GO:0007530">
    <property type="term" value="P:sex determination"/>
    <property type="evidence" value="ECO:0000250"/>
    <property type="project" value="UniProtKB"/>
</dbReference>
<dbReference type="GO" id="GO:0009888">
    <property type="term" value="P:tissue development"/>
    <property type="evidence" value="ECO:0000318"/>
    <property type="project" value="GO_Central"/>
</dbReference>
<dbReference type="CDD" id="cd07167">
    <property type="entry name" value="NR_DBD_Lrh-1_like"/>
    <property type="match status" value="1"/>
</dbReference>
<dbReference type="CDD" id="cd07070">
    <property type="entry name" value="NR_LBD_SF-1"/>
    <property type="match status" value="1"/>
</dbReference>
<dbReference type="FunFam" id="3.30.50.10:FF:000006">
    <property type="entry name" value="Nuclear receptor subfamily 5 group A member"/>
    <property type="match status" value="1"/>
</dbReference>
<dbReference type="FunFam" id="1.10.565.10:FF:000011">
    <property type="entry name" value="Nuclear receptor subfamily 5, group A, member 2"/>
    <property type="match status" value="1"/>
</dbReference>
<dbReference type="Gene3D" id="3.30.50.10">
    <property type="entry name" value="Erythroid Transcription Factor GATA-1, subunit A"/>
    <property type="match status" value="1"/>
</dbReference>
<dbReference type="Gene3D" id="1.10.565.10">
    <property type="entry name" value="Retinoid X Receptor"/>
    <property type="match status" value="1"/>
</dbReference>
<dbReference type="InterPro" id="IPR035500">
    <property type="entry name" value="NHR-like_dom_sf"/>
</dbReference>
<dbReference type="InterPro" id="IPR016355">
    <property type="entry name" value="NR5-like"/>
</dbReference>
<dbReference type="InterPro" id="IPR000536">
    <property type="entry name" value="Nucl_hrmn_rcpt_lig-bd"/>
</dbReference>
<dbReference type="InterPro" id="IPR001723">
    <property type="entry name" value="Nuclear_hrmn_rcpt"/>
</dbReference>
<dbReference type="InterPro" id="IPR001628">
    <property type="entry name" value="Znf_hrmn_rcpt"/>
</dbReference>
<dbReference type="InterPro" id="IPR013088">
    <property type="entry name" value="Znf_NHR/GATA"/>
</dbReference>
<dbReference type="PANTHER" id="PTHR24086">
    <property type="entry name" value="NUCLEAR RECEPTOR SUBFAMILY 5 GROUP A"/>
    <property type="match status" value="1"/>
</dbReference>
<dbReference type="PANTHER" id="PTHR24086:SF24">
    <property type="entry name" value="STEROIDOGENIC FACTOR 1"/>
    <property type="match status" value="1"/>
</dbReference>
<dbReference type="Pfam" id="PF00104">
    <property type="entry name" value="Hormone_recep"/>
    <property type="match status" value="1"/>
</dbReference>
<dbReference type="Pfam" id="PF00105">
    <property type="entry name" value="zf-C4"/>
    <property type="match status" value="1"/>
</dbReference>
<dbReference type="PIRSF" id="PIRSF002530">
    <property type="entry name" value="Nuc_orph_FTZ-F1"/>
    <property type="match status" value="1"/>
</dbReference>
<dbReference type="PRINTS" id="PR00398">
    <property type="entry name" value="STRDHORMONER"/>
</dbReference>
<dbReference type="PRINTS" id="PR00047">
    <property type="entry name" value="STROIDFINGER"/>
</dbReference>
<dbReference type="SMART" id="SM00430">
    <property type="entry name" value="HOLI"/>
    <property type="match status" value="1"/>
</dbReference>
<dbReference type="SMART" id="SM00399">
    <property type="entry name" value="ZnF_C4"/>
    <property type="match status" value="1"/>
</dbReference>
<dbReference type="SUPFAM" id="SSF57716">
    <property type="entry name" value="Glucocorticoid receptor-like (DNA-binding domain)"/>
    <property type="match status" value="1"/>
</dbReference>
<dbReference type="SUPFAM" id="SSF48508">
    <property type="entry name" value="Nuclear receptor ligand-binding domain"/>
    <property type="match status" value="1"/>
</dbReference>
<dbReference type="PROSITE" id="PS51843">
    <property type="entry name" value="NR_LBD"/>
    <property type="match status" value="1"/>
</dbReference>
<dbReference type="PROSITE" id="PS00031">
    <property type="entry name" value="NUCLEAR_REC_DBD_1"/>
    <property type="match status" value="1"/>
</dbReference>
<dbReference type="PROSITE" id="PS51030">
    <property type="entry name" value="NUCLEAR_REC_DBD_2"/>
    <property type="match status" value="1"/>
</dbReference>
<organism>
    <name type="scientific">Bos taurus</name>
    <name type="common">Bovine</name>
    <dbReference type="NCBI Taxonomy" id="9913"/>
    <lineage>
        <taxon>Eukaryota</taxon>
        <taxon>Metazoa</taxon>
        <taxon>Chordata</taxon>
        <taxon>Craniata</taxon>
        <taxon>Vertebrata</taxon>
        <taxon>Euteleostomi</taxon>
        <taxon>Mammalia</taxon>
        <taxon>Eutheria</taxon>
        <taxon>Laurasiatheria</taxon>
        <taxon>Artiodactyla</taxon>
        <taxon>Ruminantia</taxon>
        <taxon>Pecora</taxon>
        <taxon>Bovidae</taxon>
        <taxon>Bovinae</taxon>
        <taxon>Bos</taxon>
    </lineage>
</organism>
<protein>
    <recommendedName>
        <fullName>Steroidogenic factor 1</fullName>
        <shortName>SF-1</shortName>
        <shortName>STF-1</shortName>
    </recommendedName>
    <alternativeName>
        <fullName>Adrenal 4-binding protein</fullName>
    </alternativeName>
    <alternativeName>
        <fullName>Fushi tarazu factor homolog 1</fullName>
    </alternativeName>
    <alternativeName>
        <fullName>Nuclear receptor subfamily 5 group A member 1</fullName>
    </alternativeName>
    <alternativeName>
        <fullName>Steroid hormone receptor Ad4BP</fullName>
    </alternativeName>
</protein>
<name>STF1_BOVIN</name>
<proteinExistence type="evidence at protein level"/>
<evidence type="ECO:0000250" key="1"/>
<evidence type="ECO:0000250" key="2">
    <source>
        <dbReference type="UniProtKB" id="P33242"/>
    </source>
</evidence>
<evidence type="ECO:0000250" key="3">
    <source>
        <dbReference type="UniProtKB" id="Q13285"/>
    </source>
</evidence>
<evidence type="ECO:0000255" key="4">
    <source>
        <dbReference type="PROSITE-ProRule" id="PRU00407"/>
    </source>
</evidence>
<evidence type="ECO:0000255" key="5">
    <source>
        <dbReference type="PROSITE-ProRule" id="PRU01189"/>
    </source>
</evidence>
<evidence type="ECO:0000256" key="6">
    <source>
        <dbReference type="SAM" id="MobiDB-lite"/>
    </source>
</evidence>
<evidence type="ECO:0000305" key="7"/>
<keyword id="KW-0007">Acetylation</keyword>
<keyword id="KW-0010">Activator</keyword>
<keyword id="KW-0903">Direct protein sequencing</keyword>
<keyword id="KW-0238">DNA-binding</keyword>
<keyword id="KW-1017">Isopeptide bond</keyword>
<keyword id="KW-0446">Lipid-binding</keyword>
<keyword id="KW-0479">Metal-binding</keyword>
<keyword id="KW-0539">Nucleus</keyword>
<keyword id="KW-0597">Phosphoprotein</keyword>
<keyword id="KW-0675">Receptor</keyword>
<keyword id="KW-1185">Reference proteome</keyword>
<keyword id="KW-0804">Transcription</keyword>
<keyword id="KW-0805">Transcription regulation</keyword>
<keyword id="KW-0832">Ubl conjugation</keyword>
<keyword id="KW-0862">Zinc</keyword>
<keyword id="KW-0863">Zinc-finger</keyword>
<feature type="chain" id="PRO_0000053728" description="Steroidogenic factor 1">
    <location>
        <begin position="1"/>
        <end position="461"/>
    </location>
</feature>
<feature type="domain" description="NR LBD" evidence="5">
    <location>
        <begin position="222"/>
        <end position="459"/>
    </location>
</feature>
<feature type="DNA-binding region" description="Nuclear receptor" evidence="4">
    <location>
        <begin position="10"/>
        <end position="85"/>
    </location>
</feature>
<feature type="zinc finger region" description="NR C4-type" evidence="4">
    <location>
        <begin position="13"/>
        <end position="33"/>
    </location>
</feature>
<feature type="zinc finger region" description="NR C4-type" evidence="4">
    <location>
        <begin position="49"/>
        <end position="73"/>
    </location>
</feature>
<feature type="region of interest" description="Disordered" evidence="6">
    <location>
        <begin position="116"/>
        <end position="158"/>
    </location>
</feature>
<feature type="region of interest" description="Important for dimerization">
    <location>
        <begin position="230"/>
        <end position="461"/>
    </location>
</feature>
<feature type="compositionally biased region" description="Pro residues" evidence="6">
    <location>
        <begin position="126"/>
        <end position="138"/>
    </location>
</feature>
<feature type="binding site" evidence="2">
    <location>
        <position position="341"/>
    </location>
    <ligand>
        <name>a 1,2-diacyl-sn-glycero-3-phosphocholine</name>
        <dbReference type="ChEBI" id="CHEBI:57643"/>
    </ligand>
</feature>
<feature type="binding site" evidence="2">
    <location>
        <position position="436"/>
    </location>
    <ligand>
        <name>a 1,2-diacyl-sn-glycero-3-phosphocholine</name>
        <dbReference type="ChEBI" id="CHEBI:57643"/>
    </ligand>
</feature>
<feature type="binding site" evidence="2">
    <location>
        <position position="440"/>
    </location>
    <ligand>
        <name>a 1,2-diacyl-sn-glycero-3-phosphocholine</name>
        <dbReference type="ChEBI" id="CHEBI:57643"/>
    </ligand>
</feature>
<feature type="modified residue" description="N6-acetyllysine" evidence="3">
    <location>
        <position position="34"/>
    </location>
</feature>
<feature type="modified residue" description="N6-acetyllysine" evidence="3">
    <location>
        <position position="38"/>
    </location>
</feature>
<feature type="modified residue" description="N6-acetyllysine" evidence="3">
    <location>
        <position position="72"/>
    </location>
</feature>
<feature type="modified residue" description="Phosphoserine; by CDK7" evidence="3">
    <location>
        <position position="203"/>
    </location>
</feature>
<feature type="cross-link" description="Glycyl lysine isopeptide (Lys-Gly) (interchain with G-Cter in SUMO)" evidence="1">
    <location>
        <position position="119"/>
    </location>
</feature>
<feature type="cross-link" description="Glycyl lysine isopeptide (Lys-Gly) (interchain with G-Cter in SUMO)" evidence="1">
    <location>
        <position position="194"/>
    </location>
</feature>
<feature type="sequence conflict" description="In Ref. 2; AAB23574." evidence="7" ref="2">
    <location>
        <begin position="64"/>
        <end position="65"/>
    </location>
</feature>
<reference key="1">
    <citation type="journal article" date="1993" name="J. Biol. Chem.">
        <title>Ad4BP regulating steroidogenic P-450 gene is a member of steroid hormone receptor superfamily.</title>
        <authorList>
            <person name="Honda S."/>
            <person name="Morohashi K."/>
            <person name="Nomura M."/>
            <person name="Takeya H."/>
            <person name="Kitajima M."/>
            <person name="Omura T."/>
        </authorList>
    </citation>
    <scope>NUCLEOTIDE SEQUENCE [MRNA]</scope>
    <scope>PROTEIN SEQUENCE OF 120-180</scope>
    <source>
        <tissue>Adrenal cortex</tissue>
    </source>
</reference>
<reference key="2">
    <citation type="journal article" date="1992" name="Mol. Endocrinol.">
        <title>Steroidogenic factor I, a key regulator of steroidogenic enzyme expression, is the mouse homolog of fushi tarazu-factor I.</title>
        <authorList>
            <person name="Lala D.S."/>
            <person name="Rice D.A."/>
            <person name="Parker K.L."/>
        </authorList>
    </citation>
    <scope>NUCLEOTIDE SEQUENCE [MRNA] OF 13-81</scope>
</reference>
<gene>
    <name type="primary">NR5A1</name>
    <name type="synonym">AD4BP</name>
    <name type="synonym">FTZF1</name>
</gene>
<accession>Q04752</accession>
<sequence length="461" mass="51613">MDYSYDEDLDELCPVCGDKVSGYHYGLLTCESCKGFFKRTVQNNKHYTCTESQSCKIDKTQRKRCPFCRFQKCLTVGMRLEAVRADRMRGGRNKFGPMYKRDRALKQQKKAQIRANGFKLETGPPVGVPPPPPPPPDYMLPHGLHASEPKGLASGPPAGPLGDFGAPALPMAVPSAHGPLAGYLYPAFPGRAIKSEYPEPYASPPQPGPPYGYPEPFSGGPGVPELILQLLQLEPDEDQVRARIVGCLQEPAKGRPDQPAPFSLLCRMADQTFISIVDWARRCMVFKELEVADQMTLLQNCWSELLVFDHIYRQIQHGKEGSILLVTGQEVELTTVAAQAGSLLHSLVLRAQELVLQLHALQLDRQEFVCLKFLILFSLDVKFLNNHSLVKEAQEKANAALLDYTLCHYPHCGDKFQQLLLCLVEVRALSMQAKEYLYHKHLGNEMPRNNLLIEMLQAKQT</sequence>